<reference key="1">
    <citation type="journal article" date="2011" name="PLoS Genet.">
        <title>The evolution of host specialization in the vertebrate gut symbiont Lactobacillus reuteri.</title>
        <authorList>
            <person name="Frese S.A."/>
            <person name="Benson A.K."/>
            <person name="Tannock G.W."/>
            <person name="Loach D.M."/>
            <person name="Kim J."/>
            <person name="Zhang M."/>
            <person name="Oh P.L."/>
            <person name="Heng N.C."/>
            <person name="Patil P.B."/>
            <person name="Juge N."/>
            <person name="Mackenzie D.A."/>
            <person name="Pearson B.M."/>
            <person name="Lapidus A."/>
            <person name="Dalin E."/>
            <person name="Tice H."/>
            <person name="Goltsman E."/>
            <person name="Land M."/>
            <person name="Hauser L."/>
            <person name="Ivanova N."/>
            <person name="Kyrpides N.C."/>
            <person name="Walter J."/>
        </authorList>
    </citation>
    <scope>NUCLEOTIDE SEQUENCE [LARGE SCALE GENOMIC DNA]</scope>
    <source>
        <strain>DSM 20016</strain>
    </source>
</reference>
<dbReference type="EC" id="2.7.8.13" evidence="1"/>
<dbReference type="EMBL" id="CP000705">
    <property type="protein sequence ID" value="ABQ82855.1"/>
    <property type="molecule type" value="Genomic_DNA"/>
</dbReference>
<dbReference type="RefSeq" id="WP_003666758.1">
    <property type="nucleotide sequence ID" value="NZ_AZDD01000002.1"/>
</dbReference>
<dbReference type="SMR" id="A5VJ31"/>
<dbReference type="STRING" id="557436.Lreu_0588"/>
<dbReference type="GeneID" id="77190732"/>
<dbReference type="KEGG" id="lre:Lreu_0588"/>
<dbReference type="PATRIC" id="fig|557436.17.peg.660"/>
<dbReference type="eggNOG" id="COG0472">
    <property type="taxonomic scope" value="Bacteria"/>
</dbReference>
<dbReference type="HOGENOM" id="CLU_023982_0_0_9"/>
<dbReference type="UniPathway" id="UPA00219"/>
<dbReference type="Proteomes" id="UP000001991">
    <property type="component" value="Chromosome"/>
</dbReference>
<dbReference type="GO" id="GO:0005886">
    <property type="term" value="C:plasma membrane"/>
    <property type="evidence" value="ECO:0007669"/>
    <property type="project" value="UniProtKB-SubCell"/>
</dbReference>
<dbReference type="GO" id="GO:0046872">
    <property type="term" value="F:metal ion binding"/>
    <property type="evidence" value="ECO:0007669"/>
    <property type="project" value="UniProtKB-KW"/>
</dbReference>
<dbReference type="GO" id="GO:0008963">
    <property type="term" value="F:phospho-N-acetylmuramoyl-pentapeptide-transferase activity"/>
    <property type="evidence" value="ECO:0007669"/>
    <property type="project" value="UniProtKB-UniRule"/>
</dbReference>
<dbReference type="GO" id="GO:0051301">
    <property type="term" value="P:cell division"/>
    <property type="evidence" value="ECO:0007669"/>
    <property type="project" value="UniProtKB-KW"/>
</dbReference>
<dbReference type="GO" id="GO:0071555">
    <property type="term" value="P:cell wall organization"/>
    <property type="evidence" value="ECO:0007669"/>
    <property type="project" value="UniProtKB-KW"/>
</dbReference>
<dbReference type="GO" id="GO:0009252">
    <property type="term" value="P:peptidoglycan biosynthetic process"/>
    <property type="evidence" value="ECO:0007669"/>
    <property type="project" value="UniProtKB-UniRule"/>
</dbReference>
<dbReference type="GO" id="GO:0008360">
    <property type="term" value="P:regulation of cell shape"/>
    <property type="evidence" value="ECO:0007669"/>
    <property type="project" value="UniProtKB-KW"/>
</dbReference>
<dbReference type="CDD" id="cd06852">
    <property type="entry name" value="GT_MraY"/>
    <property type="match status" value="1"/>
</dbReference>
<dbReference type="HAMAP" id="MF_00038">
    <property type="entry name" value="MraY"/>
    <property type="match status" value="1"/>
</dbReference>
<dbReference type="InterPro" id="IPR000715">
    <property type="entry name" value="Glycosyl_transferase_4"/>
</dbReference>
<dbReference type="InterPro" id="IPR003524">
    <property type="entry name" value="PNAcMuramoyl-5peptid_Trfase"/>
</dbReference>
<dbReference type="InterPro" id="IPR018480">
    <property type="entry name" value="PNAcMuramoyl-5peptid_Trfase_CS"/>
</dbReference>
<dbReference type="NCBIfam" id="TIGR00445">
    <property type="entry name" value="mraY"/>
    <property type="match status" value="1"/>
</dbReference>
<dbReference type="PANTHER" id="PTHR22926">
    <property type="entry name" value="PHOSPHO-N-ACETYLMURAMOYL-PENTAPEPTIDE-TRANSFERASE"/>
    <property type="match status" value="1"/>
</dbReference>
<dbReference type="PANTHER" id="PTHR22926:SF5">
    <property type="entry name" value="PHOSPHO-N-ACETYLMURAMOYL-PENTAPEPTIDE-TRANSFERASE HOMOLOG"/>
    <property type="match status" value="1"/>
</dbReference>
<dbReference type="Pfam" id="PF00953">
    <property type="entry name" value="Glycos_transf_4"/>
    <property type="match status" value="1"/>
</dbReference>
<dbReference type="Pfam" id="PF10555">
    <property type="entry name" value="MraY_sig1"/>
    <property type="match status" value="1"/>
</dbReference>
<dbReference type="PROSITE" id="PS01347">
    <property type="entry name" value="MRAY_1"/>
    <property type="match status" value="1"/>
</dbReference>
<dbReference type="PROSITE" id="PS01348">
    <property type="entry name" value="MRAY_2"/>
    <property type="match status" value="1"/>
</dbReference>
<gene>
    <name evidence="1" type="primary">mraY</name>
    <name type="ordered locus">Lreu_0588</name>
</gene>
<accession>A5VJ31</accession>
<protein>
    <recommendedName>
        <fullName evidence="1">Phospho-N-acetylmuramoyl-pentapeptide-transferase</fullName>
        <ecNumber evidence="1">2.7.8.13</ecNumber>
    </recommendedName>
    <alternativeName>
        <fullName evidence="1">UDP-MurNAc-pentapeptide phosphotransferase</fullName>
    </alternativeName>
</protein>
<evidence type="ECO:0000255" key="1">
    <source>
        <dbReference type="HAMAP-Rule" id="MF_00038"/>
    </source>
</evidence>
<sequence>MNFLSAVLTILSSFLITFLLMPSLIKYFRAKKEGQQIRKEGPTWHAKKAGTPTMGGLLFIFSAVVTILWVAAWQGLITNTLWALLFVLVVYGLIGMWDDSIKIFHHQNEGFKPWQKALCQVLAAMVFTVIYQHEGFQMGFGTTQIGWLYGLFIIFWIVGFSNAVNLTDGLDGLVSGLSIISFAAYLIIALVNLNQPGYPEIALFCLAMIGTLLGFFPYNHKPAKIFMGDMGSLAIGASLAAVSLLLHHEWSLLVIGIVYVCETASVILQVASFKTTGKRIFKMTPIHHHFEMSGWSEWKIDIVFWLVGLVAAIIAVTTILLVG</sequence>
<keyword id="KW-0131">Cell cycle</keyword>
<keyword id="KW-0132">Cell division</keyword>
<keyword id="KW-1003">Cell membrane</keyword>
<keyword id="KW-0133">Cell shape</keyword>
<keyword id="KW-0961">Cell wall biogenesis/degradation</keyword>
<keyword id="KW-0460">Magnesium</keyword>
<keyword id="KW-0472">Membrane</keyword>
<keyword id="KW-0479">Metal-binding</keyword>
<keyword id="KW-0573">Peptidoglycan synthesis</keyword>
<keyword id="KW-1185">Reference proteome</keyword>
<keyword id="KW-0808">Transferase</keyword>
<keyword id="KW-0812">Transmembrane</keyword>
<keyword id="KW-1133">Transmembrane helix</keyword>
<comment type="function">
    <text evidence="1">Catalyzes the initial step of the lipid cycle reactions in the biosynthesis of the cell wall peptidoglycan: transfers peptidoglycan precursor phospho-MurNAc-pentapeptide from UDP-MurNAc-pentapeptide onto the lipid carrier undecaprenyl phosphate, yielding undecaprenyl-pyrophosphoryl-MurNAc-pentapeptide, known as lipid I.</text>
</comment>
<comment type="catalytic activity">
    <reaction evidence="1">
        <text>UDP-N-acetyl-alpha-D-muramoyl-L-alanyl-gamma-D-glutamyl-L-lysyl-D-alanyl-D-alanine + di-trans,octa-cis-undecaprenyl phosphate = Mur2Ac(oyl-L-Ala-gamma-D-Glu-L-Lys-D-Ala-D-Ala)-di-trans,octa-cis-undecaprenyl diphosphate + UMP</text>
        <dbReference type="Rhea" id="RHEA:21920"/>
        <dbReference type="ChEBI" id="CHEBI:57865"/>
        <dbReference type="ChEBI" id="CHEBI:60032"/>
        <dbReference type="ChEBI" id="CHEBI:60392"/>
        <dbReference type="ChEBI" id="CHEBI:70758"/>
        <dbReference type="EC" id="2.7.8.13"/>
    </reaction>
</comment>
<comment type="cofactor">
    <cofactor evidence="1">
        <name>Mg(2+)</name>
        <dbReference type="ChEBI" id="CHEBI:18420"/>
    </cofactor>
</comment>
<comment type="pathway">
    <text evidence="1">Cell wall biogenesis; peptidoglycan biosynthesis.</text>
</comment>
<comment type="subcellular location">
    <subcellularLocation>
        <location evidence="1">Cell membrane</location>
        <topology evidence="1">Multi-pass membrane protein</topology>
    </subcellularLocation>
</comment>
<comment type="similarity">
    <text evidence="1">Belongs to the glycosyltransferase 4 family. MraY subfamily.</text>
</comment>
<proteinExistence type="inferred from homology"/>
<organism>
    <name type="scientific">Limosilactobacillus reuteri (strain DSM 20016)</name>
    <name type="common">Lactobacillus reuteri</name>
    <dbReference type="NCBI Taxonomy" id="557436"/>
    <lineage>
        <taxon>Bacteria</taxon>
        <taxon>Bacillati</taxon>
        <taxon>Bacillota</taxon>
        <taxon>Bacilli</taxon>
        <taxon>Lactobacillales</taxon>
        <taxon>Lactobacillaceae</taxon>
        <taxon>Limosilactobacillus</taxon>
    </lineage>
</organism>
<name>MRAY_LIMRD</name>
<feature type="chain" id="PRO_1000057280" description="Phospho-N-acetylmuramoyl-pentapeptide-transferase">
    <location>
        <begin position="1"/>
        <end position="323"/>
    </location>
</feature>
<feature type="transmembrane region" description="Helical" evidence="1">
    <location>
        <begin position="5"/>
        <end position="25"/>
    </location>
</feature>
<feature type="transmembrane region" description="Helical" evidence="1">
    <location>
        <begin position="57"/>
        <end position="77"/>
    </location>
</feature>
<feature type="transmembrane region" description="Helical" evidence="1">
    <location>
        <begin position="81"/>
        <end position="101"/>
    </location>
</feature>
<feature type="transmembrane region" description="Helical" evidence="1">
    <location>
        <begin position="118"/>
        <end position="138"/>
    </location>
</feature>
<feature type="transmembrane region" description="Helical" evidence="1">
    <location>
        <begin position="140"/>
        <end position="160"/>
    </location>
</feature>
<feature type="transmembrane region" description="Helical" evidence="1">
    <location>
        <begin position="173"/>
        <end position="193"/>
    </location>
</feature>
<feature type="transmembrane region" description="Helical" evidence="1">
    <location>
        <begin position="196"/>
        <end position="216"/>
    </location>
</feature>
<feature type="transmembrane region" description="Helical" evidence="1">
    <location>
        <begin position="225"/>
        <end position="247"/>
    </location>
</feature>
<feature type="transmembrane region" description="Helical" evidence="1">
    <location>
        <begin position="302"/>
        <end position="322"/>
    </location>
</feature>